<reference key="1">
    <citation type="journal article" date="2004" name="Proc. Natl. Acad. Sci. U.S.A.">
        <title>The louse-borne human pathogen Bartonella quintana is a genomic derivative of the zoonotic agent Bartonella henselae.</title>
        <authorList>
            <person name="Alsmark U.C.M."/>
            <person name="Frank A.C."/>
            <person name="Karlberg E.O."/>
            <person name="Legault B.-A."/>
            <person name="Ardell D.H."/>
            <person name="Canbaeck B."/>
            <person name="Eriksson A.-S."/>
            <person name="Naeslund A.K."/>
            <person name="Handley S.A."/>
            <person name="Huvet M."/>
            <person name="La Scola B."/>
            <person name="Holmberg M."/>
            <person name="Andersson S.G.E."/>
        </authorList>
    </citation>
    <scope>NUCLEOTIDE SEQUENCE [LARGE SCALE GENOMIC DNA]</scope>
    <source>
        <strain>Toulouse</strain>
    </source>
</reference>
<dbReference type="EC" id="3.1.2.6" evidence="1"/>
<dbReference type="EMBL" id="BX897700">
    <property type="protein sequence ID" value="CAF26810.1"/>
    <property type="molecule type" value="Genomic_DNA"/>
</dbReference>
<dbReference type="RefSeq" id="WP_011179964.1">
    <property type="nucleotide sequence ID" value="NC_005955.1"/>
</dbReference>
<dbReference type="SMR" id="Q6FYC3"/>
<dbReference type="KEGG" id="bqu:BQ13520"/>
<dbReference type="eggNOG" id="COG0491">
    <property type="taxonomic scope" value="Bacteria"/>
</dbReference>
<dbReference type="HOGENOM" id="CLU_030571_4_1_5"/>
<dbReference type="OrthoDB" id="9802248at2"/>
<dbReference type="UniPathway" id="UPA00619">
    <property type="reaction ID" value="UER00676"/>
</dbReference>
<dbReference type="Proteomes" id="UP000000597">
    <property type="component" value="Chromosome"/>
</dbReference>
<dbReference type="GO" id="GO:0004416">
    <property type="term" value="F:hydroxyacylglutathione hydrolase activity"/>
    <property type="evidence" value="ECO:0007669"/>
    <property type="project" value="UniProtKB-UniRule"/>
</dbReference>
<dbReference type="GO" id="GO:0046872">
    <property type="term" value="F:metal ion binding"/>
    <property type="evidence" value="ECO:0007669"/>
    <property type="project" value="UniProtKB-KW"/>
</dbReference>
<dbReference type="GO" id="GO:0019243">
    <property type="term" value="P:methylglyoxal catabolic process to D-lactate via S-lactoyl-glutathione"/>
    <property type="evidence" value="ECO:0007669"/>
    <property type="project" value="InterPro"/>
</dbReference>
<dbReference type="CDD" id="cd07723">
    <property type="entry name" value="hydroxyacylglutathione_hydrolase_MBL-fold"/>
    <property type="match status" value="1"/>
</dbReference>
<dbReference type="Gene3D" id="3.60.15.10">
    <property type="entry name" value="Ribonuclease Z/Hydroxyacylglutathione hydrolase-like"/>
    <property type="match status" value="1"/>
</dbReference>
<dbReference type="HAMAP" id="MF_01374">
    <property type="entry name" value="Glyoxalase_2"/>
    <property type="match status" value="1"/>
</dbReference>
<dbReference type="InterPro" id="IPR035680">
    <property type="entry name" value="Clx_II_MBL"/>
</dbReference>
<dbReference type="InterPro" id="IPR050110">
    <property type="entry name" value="Glyoxalase_II_hydrolase"/>
</dbReference>
<dbReference type="InterPro" id="IPR032282">
    <property type="entry name" value="HAGH_C"/>
</dbReference>
<dbReference type="InterPro" id="IPR017782">
    <property type="entry name" value="Hydroxyacylglutathione_Hdrlase"/>
</dbReference>
<dbReference type="InterPro" id="IPR001279">
    <property type="entry name" value="Metallo-B-lactamas"/>
</dbReference>
<dbReference type="InterPro" id="IPR036866">
    <property type="entry name" value="RibonucZ/Hydroxyglut_hydro"/>
</dbReference>
<dbReference type="NCBIfam" id="TIGR03413">
    <property type="entry name" value="GSH_gloB"/>
    <property type="match status" value="1"/>
</dbReference>
<dbReference type="PANTHER" id="PTHR43705">
    <property type="entry name" value="HYDROXYACYLGLUTATHIONE HYDROLASE"/>
    <property type="match status" value="1"/>
</dbReference>
<dbReference type="PANTHER" id="PTHR43705:SF1">
    <property type="entry name" value="HYDROXYACYLGLUTATHIONE HYDROLASE GLOB"/>
    <property type="match status" value="1"/>
</dbReference>
<dbReference type="Pfam" id="PF16123">
    <property type="entry name" value="HAGH_C"/>
    <property type="match status" value="1"/>
</dbReference>
<dbReference type="Pfam" id="PF00753">
    <property type="entry name" value="Lactamase_B"/>
    <property type="match status" value="1"/>
</dbReference>
<dbReference type="PIRSF" id="PIRSF005457">
    <property type="entry name" value="Glx"/>
    <property type="match status" value="1"/>
</dbReference>
<dbReference type="SMART" id="SM00849">
    <property type="entry name" value="Lactamase_B"/>
    <property type="match status" value="1"/>
</dbReference>
<dbReference type="SUPFAM" id="SSF56281">
    <property type="entry name" value="Metallo-hydrolase/oxidoreductase"/>
    <property type="match status" value="1"/>
</dbReference>
<accession>Q6FYC3</accession>
<comment type="function">
    <text evidence="1">Thiolesterase that catalyzes the hydrolysis of S-D-lactoyl-glutathione to form glutathione and D-lactic acid.</text>
</comment>
<comment type="catalytic activity">
    <reaction evidence="1">
        <text>an S-(2-hydroxyacyl)glutathione + H2O = a 2-hydroxy carboxylate + glutathione + H(+)</text>
        <dbReference type="Rhea" id="RHEA:21864"/>
        <dbReference type="ChEBI" id="CHEBI:15377"/>
        <dbReference type="ChEBI" id="CHEBI:15378"/>
        <dbReference type="ChEBI" id="CHEBI:57925"/>
        <dbReference type="ChEBI" id="CHEBI:58896"/>
        <dbReference type="ChEBI" id="CHEBI:71261"/>
        <dbReference type="EC" id="3.1.2.6"/>
    </reaction>
</comment>
<comment type="cofactor">
    <cofactor evidence="1">
        <name>Zn(2+)</name>
        <dbReference type="ChEBI" id="CHEBI:29105"/>
    </cofactor>
    <text evidence="1">Binds 2 Zn(2+) ions per subunit.</text>
</comment>
<comment type="pathway">
    <text evidence="1">Secondary metabolite metabolism; methylglyoxal degradation; (R)-lactate from methylglyoxal: step 2/2.</text>
</comment>
<comment type="subunit">
    <text evidence="1">Monomer.</text>
</comment>
<comment type="similarity">
    <text evidence="1">Belongs to the metallo-beta-lactamase superfamily. Glyoxalase II family.</text>
</comment>
<name>GLO2_BARQU</name>
<sequence length="253" mass="28958">MLIEQFICREDNFGVLIHDERSGYTAAIDAPESKAICSALKRRNWTLQTIFVTHHHHDHIEALAELKQIYKAVVIGPEAEKEKIGHLDQALQPDESLFFGTHTLLALSTPGHTLGSLSYYFPQENLLFSGDTLFSLGCGRLFEGTPAQMLNSFKKLRQLPDETLLYCGHEYTKTNALFALTLDSHNQKLHQRVEDVFLLRAKNAMTLPVTLGQEKATNPFLRWDDRTLRKNLAMEKETDEEVFAEIRKRKDNF</sequence>
<feature type="chain" id="PRO_1000068209" description="Hydroxyacylglutathione hydrolase">
    <location>
        <begin position="1"/>
        <end position="253"/>
    </location>
</feature>
<feature type="binding site" evidence="1">
    <location>
        <position position="54"/>
    </location>
    <ligand>
        <name>Zn(2+)</name>
        <dbReference type="ChEBI" id="CHEBI:29105"/>
        <label>1</label>
    </ligand>
</feature>
<feature type="binding site" evidence="1">
    <location>
        <position position="56"/>
    </location>
    <ligand>
        <name>Zn(2+)</name>
        <dbReference type="ChEBI" id="CHEBI:29105"/>
        <label>1</label>
    </ligand>
</feature>
<feature type="binding site" evidence="1">
    <location>
        <position position="58"/>
    </location>
    <ligand>
        <name>Zn(2+)</name>
        <dbReference type="ChEBI" id="CHEBI:29105"/>
        <label>2</label>
    </ligand>
</feature>
<feature type="binding site" evidence="1">
    <location>
        <position position="59"/>
    </location>
    <ligand>
        <name>Zn(2+)</name>
        <dbReference type="ChEBI" id="CHEBI:29105"/>
        <label>2</label>
    </ligand>
</feature>
<feature type="binding site" evidence="1">
    <location>
        <position position="112"/>
    </location>
    <ligand>
        <name>Zn(2+)</name>
        <dbReference type="ChEBI" id="CHEBI:29105"/>
        <label>1</label>
    </ligand>
</feature>
<feature type="binding site" evidence="1">
    <location>
        <position position="131"/>
    </location>
    <ligand>
        <name>Zn(2+)</name>
        <dbReference type="ChEBI" id="CHEBI:29105"/>
        <label>1</label>
    </ligand>
</feature>
<feature type="binding site" evidence="1">
    <location>
        <position position="131"/>
    </location>
    <ligand>
        <name>Zn(2+)</name>
        <dbReference type="ChEBI" id="CHEBI:29105"/>
        <label>2</label>
    </ligand>
</feature>
<feature type="binding site" evidence="1">
    <location>
        <position position="169"/>
    </location>
    <ligand>
        <name>Zn(2+)</name>
        <dbReference type="ChEBI" id="CHEBI:29105"/>
        <label>2</label>
    </ligand>
</feature>
<gene>
    <name evidence="1" type="primary">gloB</name>
    <name type="ordered locus">BQ13520</name>
</gene>
<protein>
    <recommendedName>
        <fullName evidence="1">Hydroxyacylglutathione hydrolase</fullName>
        <ecNumber evidence="1">3.1.2.6</ecNumber>
    </recommendedName>
    <alternativeName>
        <fullName evidence="1">Glyoxalase II</fullName>
        <shortName evidence="1">Glx II</shortName>
    </alternativeName>
</protein>
<keyword id="KW-0378">Hydrolase</keyword>
<keyword id="KW-0479">Metal-binding</keyword>
<keyword id="KW-0862">Zinc</keyword>
<evidence type="ECO:0000255" key="1">
    <source>
        <dbReference type="HAMAP-Rule" id="MF_01374"/>
    </source>
</evidence>
<organism>
    <name type="scientific">Bartonella quintana (strain Toulouse)</name>
    <name type="common">Rochalimaea quintana</name>
    <dbReference type="NCBI Taxonomy" id="283165"/>
    <lineage>
        <taxon>Bacteria</taxon>
        <taxon>Pseudomonadati</taxon>
        <taxon>Pseudomonadota</taxon>
        <taxon>Alphaproteobacteria</taxon>
        <taxon>Hyphomicrobiales</taxon>
        <taxon>Bartonellaceae</taxon>
        <taxon>Bartonella</taxon>
    </lineage>
</organism>
<proteinExistence type="inferred from homology"/>